<evidence type="ECO:0000255" key="1">
    <source>
        <dbReference type="HAMAP-Rule" id="MF_00544"/>
    </source>
</evidence>
<reference key="1">
    <citation type="submission" date="2008-02" db="EMBL/GenBank/DDBJ databases">
        <title>Complete sequence of Haemophilus somnus 2336.</title>
        <authorList>
            <consortium name="US DOE Joint Genome Institute"/>
            <person name="Siddaramappa S."/>
            <person name="Duncan A.J."/>
            <person name="Challacombe J.F."/>
            <person name="Rainey D."/>
            <person name="Gillaspy A.F."/>
            <person name="Carson M."/>
            <person name="Gipson J."/>
            <person name="Gipson M."/>
            <person name="Bruce D."/>
            <person name="Detter J.C."/>
            <person name="Han C.S."/>
            <person name="Land M."/>
            <person name="Tapia R."/>
            <person name="Thompson L.S."/>
            <person name="Orvis J."/>
            <person name="Zaitshik J."/>
            <person name="Barnes G."/>
            <person name="Brettin T.S."/>
            <person name="Dyer D.W."/>
            <person name="Inzana T.J."/>
        </authorList>
    </citation>
    <scope>NUCLEOTIDE SEQUENCE [LARGE SCALE GENOMIC DNA]</scope>
    <source>
        <strain>2336</strain>
    </source>
</reference>
<organism>
    <name type="scientific">Histophilus somni (strain 2336)</name>
    <name type="common">Haemophilus somnus</name>
    <dbReference type="NCBI Taxonomy" id="228400"/>
    <lineage>
        <taxon>Bacteria</taxon>
        <taxon>Pseudomonadati</taxon>
        <taxon>Pseudomonadota</taxon>
        <taxon>Gammaproteobacteria</taxon>
        <taxon>Pasteurellales</taxon>
        <taxon>Pasteurellaceae</taxon>
        <taxon>Histophilus</taxon>
    </lineage>
</organism>
<protein>
    <recommendedName>
        <fullName evidence="1">Tryptophanase</fullName>
        <ecNumber evidence="1">4.1.99.1</ecNumber>
    </recommendedName>
    <alternativeName>
        <fullName evidence="1">L-tryptophan indole-lyase</fullName>
        <shortName evidence="1">TNase</shortName>
    </alternativeName>
</protein>
<sequence>MENFKHLPEPFRIRVIEPVKRTTRAYRDEAILKAGMNLFLLDSEDIFIDLLTDSGTGAVTQDMQAAMLRGDEAYSGSRSYYALANAVKEIFGYEYTIPTHQGRGAEQIYIPVLIKKREQEKGLDRNKMVVFSNYFFDTTQGHSQLNGATVRNVYIKEAFDTDVDHDFKGNFDLEKLEQGILEVGANNVPYIVCTITCNSAGGQPVSLANMKAMYQIARKYDIPVIMDSARFAENAYFIQQREAEYKDWTIEQITYESYKYADALAMSAKKDAMVPIGGLLCFKDNSMEDVYNECRTLCVVQEGFPTYGGLEGGAMERLAVGLRDGMRQDWLAYRISQIEYLVQGLEKIGVVCQQPGGHAAFVDAGKLLPHIPAEQFPAQALACELYKVAGIRSVEIGSLLLGRDPKTGQQLPCPAELLRLTIPRATYTQTHMDFIIEAFKQVKENAKNIKGLDFTYEPKVLRHFTARLKEI</sequence>
<proteinExistence type="inferred from homology"/>
<feature type="chain" id="PRO_1000081942" description="Tryptophanase">
    <location>
        <begin position="1"/>
        <end position="471"/>
    </location>
</feature>
<feature type="modified residue" description="N6-(pyridoxal phosphate)lysine" evidence="1">
    <location>
        <position position="270"/>
    </location>
</feature>
<accession>B0UTZ3</accession>
<name>TNAA_HISS2</name>
<gene>
    <name evidence="1" type="primary">tnaA</name>
    <name type="ordered locus">HSM_1270</name>
</gene>
<keyword id="KW-0456">Lyase</keyword>
<keyword id="KW-0663">Pyridoxal phosphate</keyword>
<keyword id="KW-0823">Tryptophan catabolism</keyword>
<comment type="catalytic activity">
    <reaction evidence="1">
        <text>L-tryptophan + H2O = indole + pyruvate + NH4(+)</text>
        <dbReference type="Rhea" id="RHEA:19553"/>
        <dbReference type="ChEBI" id="CHEBI:15361"/>
        <dbReference type="ChEBI" id="CHEBI:15377"/>
        <dbReference type="ChEBI" id="CHEBI:16881"/>
        <dbReference type="ChEBI" id="CHEBI:28938"/>
        <dbReference type="ChEBI" id="CHEBI:57912"/>
        <dbReference type="EC" id="4.1.99.1"/>
    </reaction>
</comment>
<comment type="cofactor">
    <cofactor evidence="1">
        <name>pyridoxal 5'-phosphate</name>
        <dbReference type="ChEBI" id="CHEBI:597326"/>
    </cofactor>
</comment>
<comment type="pathway">
    <text evidence="1">Amino-acid degradation; L-tryptophan degradation via pyruvate pathway; indole and pyruvate from L-tryptophan: step 1/1.</text>
</comment>
<comment type="subunit">
    <text evidence="1">Homotetramer.</text>
</comment>
<comment type="similarity">
    <text evidence="1">Belongs to the beta-eliminating lyase family.</text>
</comment>
<dbReference type="EC" id="4.1.99.1" evidence="1"/>
<dbReference type="EMBL" id="CP000947">
    <property type="protein sequence ID" value="ACA30999.1"/>
    <property type="molecule type" value="Genomic_DNA"/>
</dbReference>
<dbReference type="RefSeq" id="WP_012340430.1">
    <property type="nucleotide sequence ID" value="NC_010519.1"/>
</dbReference>
<dbReference type="SMR" id="B0UTZ3"/>
<dbReference type="STRING" id="228400.HSM_1270"/>
<dbReference type="GeneID" id="31487572"/>
<dbReference type="KEGG" id="hsm:HSM_1270"/>
<dbReference type="HOGENOM" id="CLU_047223_0_0_6"/>
<dbReference type="UniPathway" id="UPA00332">
    <property type="reaction ID" value="UER00452"/>
</dbReference>
<dbReference type="GO" id="GO:0009034">
    <property type="term" value="F:tryptophanase activity"/>
    <property type="evidence" value="ECO:0007669"/>
    <property type="project" value="UniProtKB-UniRule"/>
</dbReference>
<dbReference type="FunFam" id="3.40.640.10:FF:000039">
    <property type="entry name" value="Tryptophanase"/>
    <property type="match status" value="1"/>
</dbReference>
<dbReference type="Gene3D" id="3.90.1150.10">
    <property type="entry name" value="Aspartate Aminotransferase, domain 1"/>
    <property type="match status" value="1"/>
</dbReference>
<dbReference type="Gene3D" id="3.40.640.10">
    <property type="entry name" value="Type I PLP-dependent aspartate aminotransferase-like (Major domain)"/>
    <property type="match status" value="1"/>
</dbReference>
<dbReference type="HAMAP" id="MF_00544">
    <property type="entry name" value="Tryptophanase"/>
    <property type="match status" value="1"/>
</dbReference>
<dbReference type="InterPro" id="IPR001597">
    <property type="entry name" value="ArAA_b-elim_lyase/Thr_aldolase"/>
</dbReference>
<dbReference type="InterPro" id="IPR011166">
    <property type="entry name" value="Beta-eliminating_lyase"/>
</dbReference>
<dbReference type="InterPro" id="IPR015424">
    <property type="entry name" value="PyrdxlP-dep_Trfase"/>
</dbReference>
<dbReference type="InterPro" id="IPR015421">
    <property type="entry name" value="PyrdxlP-dep_Trfase_major"/>
</dbReference>
<dbReference type="InterPro" id="IPR015422">
    <property type="entry name" value="PyrdxlP-dep_Trfase_small"/>
</dbReference>
<dbReference type="InterPro" id="IPR013440">
    <property type="entry name" value="TNase"/>
</dbReference>
<dbReference type="InterPro" id="IPR018176">
    <property type="entry name" value="Tryptophanase_CS"/>
</dbReference>
<dbReference type="NCBIfam" id="NF009709">
    <property type="entry name" value="PRK13238.1"/>
    <property type="match status" value="1"/>
</dbReference>
<dbReference type="NCBIfam" id="TIGR02617">
    <property type="entry name" value="tnaA_trp_ase"/>
    <property type="match status" value="1"/>
</dbReference>
<dbReference type="PANTHER" id="PTHR32325">
    <property type="entry name" value="BETA-ELIMINATING LYASE-LIKE PROTEIN-RELATED"/>
    <property type="match status" value="1"/>
</dbReference>
<dbReference type="PANTHER" id="PTHR32325:SF4">
    <property type="entry name" value="TRYPTOPHANASE"/>
    <property type="match status" value="1"/>
</dbReference>
<dbReference type="Pfam" id="PF01212">
    <property type="entry name" value="Beta_elim_lyase"/>
    <property type="match status" value="1"/>
</dbReference>
<dbReference type="PIRSF" id="PIRSF001386">
    <property type="entry name" value="Trpase"/>
    <property type="match status" value="1"/>
</dbReference>
<dbReference type="SUPFAM" id="SSF53383">
    <property type="entry name" value="PLP-dependent transferases"/>
    <property type="match status" value="1"/>
</dbReference>
<dbReference type="PROSITE" id="PS00853">
    <property type="entry name" value="BETA_ELIM_LYASE"/>
    <property type="match status" value="1"/>
</dbReference>